<gene>
    <name type="primary">nadD</name>
    <name type="ordered locus">Cj1404</name>
</gene>
<comment type="function">
    <text evidence="1">Catalyzes the reversible adenylation of nicotinate mononucleotide (NaMN) to nicotinic acid adenine dinucleotide (NaAD).</text>
</comment>
<comment type="catalytic activity">
    <reaction>
        <text>nicotinate beta-D-ribonucleotide + ATP + H(+) = deamido-NAD(+) + diphosphate</text>
        <dbReference type="Rhea" id="RHEA:22860"/>
        <dbReference type="ChEBI" id="CHEBI:15378"/>
        <dbReference type="ChEBI" id="CHEBI:30616"/>
        <dbReference type="ChEBI" id="CHEBI:33019"/>
        <dbReference type="ChEBI" id="CHEBI:57502"/>
        <dbReference type="ChEBI" id="CHEBI:58437"/>
        <dbReference type="EC" id="2.7.7.18"/>
    </reaction>
</comment>
<comment type="pathway">
    <text>Cofactor biosynthesis; NAD(+) biosynthesis; deamido-NAD(+) from nicotinate D-ribonucleotide: step 1/1.</text>
</comment>
<comment type="similarity">
    <text evidence="2">Belongs to the NadD family.</text>
</comment>
<accession>Q9PMQ3</accession>
<accession>Q0P8L0</accession>
<feature type="chain" id="PRO_0000181400" description="Probable nicotinate-nucleotide adenylyltransferase">
    <location>
        <begin position="1"/>
        <end position="181"/>
    </location>
</feature>
<sequence>MKIALFGGSFDPPHNGHNSVVLEALEKLDIDKLIIMPTYINPFKQSFSADEKQRFLWVKKLWGHLPKVEICDFEIRQKRPVPSIESVKYLYKLYNPSKFYLLIGADHLEKLHLWHDFEKLNSLVEFVIANRNDIGIPKNFKDLKTNKKIASSFIRDTLNTNEVCEEIKDEVKKYYEKLQKN</sequence>
<proteinExistence type="inferred from homology"/>
<evidence type="ECO:0000250" key="1"/>
<evidence type="ECO:0000305" key="2"/>
<name>NADD_CAMJE</name>
<keyword id="KW-0067">ATP-binding</keyword>
<keyword id="KW-0520">NAD</keyword>
<keyword id="KW-0547">Nucleotide-binding</keyword>
<keyword id="KW-0548">Nucleotidyltransferase</keyword>
<keyword id="KW-0662">Pyridine nucleotide biosynthesis</keyword>
<keyword id="KW-1185">Reference proteome</keyword>
<keyword id="KW-0808">Transferase</keyword>
<organism>
    <name type="scientific">Campylobacter jejuni subsp. jejuni serotype O:2 (strain ATCC 700819 / NCTC 11168)</name>
    <dbReference type="NCBI Taxonomy" id="192222"/>
    <lineage>
        <taxon>Bacteria</taxon>
        <taxon>Pseudomonadati</taxon>
        <taxon>Campylobacterota</taxon>
        <taxon>Epsilonproteobacteria</taxon>
        <taxon>Campylobacterales</taxon>
        <taxon>Campylobacteraceae</taxon>
        <taxon>Campylobacter</taxon>
    </lineage>
</organism>
<dbReference type="EC" id="2.7.7.18"/>
<dbReference type="EMBL" id="AL111168">
    <property type="protein sequence ID" value="CAL35513.1"/>
    <property type="molecule type" value="Genomic_DNA"/>
</dbReference>
<dbReference type="PIR" id="D81285">
    <property type="entry name" value="D81285"/>
</dbReference>
<dbReference type="RefSeq" id="WP_002780449.1">
    <property type="nucleotide sequence ID" value="NZ_SZUC01000003.1"/>
</dbReference>
<dbReference type="RefSeq" id="YP_002344787.1">
    <property type="nucleotide sequence ID" value="NC_002163.1"/>
</dbReference>
<dbReference type="SMR" id="Q9PMQ3"/>
<dbReference type="IntAct" id="Q9PMQ3">
    <property type="interactions" value="4"/>
</dbReference>
<dbReference type="STRING" id="192222.Cj1404"/>
<dbReference type="PaxDb" id="192222-Cj1404"/>
<dbReference type="EnsemblBacteria" id="CAL35513">
    <property type="protein sequence ID" value="CAL35513"/>
    <property type="gene ID" value="Cj1404"/>
</dbReference>
<dbReference type="GeneID" id="905693"/>
<dbReference type="KEGG" id="cje:Cj1404"/>
<dbReference type="PATRIC" id="fig|192222.6.peg.1385"/>
<dbReference type="eggNOG" id="COG1057">
    <property type="taxonomic scope" value="Bacteria"/>
</dbReference>
<dbReference type="HOGENOM" id="CLU_069765_3_2_7"/>
<dbReference type="OrthoDB" id="5295945at2"/>
<dbReference type="UniPathway" id="UPA00253">
    <property type="reaction ID" value="UER00332"/>
</dbReference>
<dbReference type="Proteomes" id="UP000000799">
    <property type="component" value="Chromosome"/>
</dbReference>
<dbReference type="GO" id="GO:0005524">
    <property type="term" value="F:ATP binding"/>
    <property type="evidence" value="ECO:0007669"/>
    <property type="project" value="UniProtKB-KW"/>
</dbReference>
<dbReference type="GO" id="GO:0004515">
    <property type="term" value="F:nicotinate-nucleotide adenylyltransferase activity"/>
    <property type="evidence" value="ECO:0007669"/>
    <property type="project" value="UniProtKB-UniRule"/>
</dbReference>
<dbReference type="GO" id="GO:0009435">
    <property type="term" value="P:NAD biosynthetic process"/>
    <property type="evidence" value="ECO:0007669"/>
    <property type="project" value="UniProtKB-UniRule"/>
</dbReference>
<dbReference type="CDD" id="cd02165">
    <property type="entry name" value="NMNAT"/>
    <property type="match status" value="1"/>
</dbReference>
<dbReference type="Gene3D" id="3.40.50.620">
    <property type="entry name" value="HUPs"/>
    <property type="match status" value="1"/>
</dbReference>
<dbReference type="HAMAP" id="MF_00244">
    <property type="entry name" value="NaMN_adenylyltr"/>
    <property type="match status" value="1"/>
</dbReference>
<dbReference type="InterPro" id="IPR004821">
    <property type="entry name" value="Cyt_trans-like"/>
</dbReference>
<dbReference type="InterPro" id="IPR005248">
    <property type="entry name" value="NadD/NMNAT"/>
</dbReference>
<dbReference type="InterPro" id="IPR014729">
    <property type="entry name" value="Rossmann-like_a/b/a_fold"/>
</dbReference>
<dbReference type="NCBIfam" id="TIGR00125">
    <property type="entry name" value="cyt_tran_rel"/>
    <property type="match status" value="1"/>
</dbReference>
<dbReference type="NCBIfam" id="TIGR00482">
    <property type="entry name" value="nicotinate (nicotinamide) nucleotide adenylyltransferase"/>
    <property type="match status" value="1"/>
</dbReference>
<dbReference type="PANTHER" id="PTHR39321">
    <property type="entry name" value="NICOTINATE-NUCLEOTIDE ADENYLYLTRANSFERASE-RELATED"/>
    <property type="match status" value="1"/>
</dbReference>
<dbReference type="PANTHER" id="PTHR39321:SF3">
    <property type="entry name" value="PHOSPHOPANTETHEINE ADENYLYLTRANSFERASE"/>
    <property type="match status" value="1"/>
</dbReference>
<dbReference type="Pfam" id="PF01467">
    <property type="entry name" value="CTP_transf_like"/>
    <property type="match status" value="1"/>
</dbReference>
<dbReference type="SUPFAM" id="SSF52374">
    <property type="entry name" value="Nucleotidylyl transferase"/>
    <property type="match status" value="1"/>
</dbReference>
<protein>
    <recommendedName>
        <fullName>Probable nicotinate-nucleotide adenylyltransferase</fullName>
        <ecNumber>2.7.7.18</ecNumber>
    </recommendedName>
    <alternativeName>
        <fullName>Deamido-NAD(+) diphosphorylase</fullName>
    </alternativeName>
    <alternativeName>
        <fullName>Deamido-NAD(+) pyrophosphorylase</fullName>
    </alternativeName>
    <alternativeName>
        <fullName>Nicotinate mononucleotide adenylyltransferase</fullName>
        <shortName>NaMN adenylyltransferase</shortName>
    </alternativeName>
</protein>
<reference key="1">
    <citation type="journal article" date="2000" name="Nature">
        <title>The genome sequence of the food-borne pathogen Campylobacter jejuni reveals hypervariable sequences.</title>
        <authorList>
            <person name="Parkhill J."/>
            <person name="Wren B.W."/>
            <person name="Mungall K.L."/>
            <person name="Ketley J.M."/>
            <person name="Churcher C.M."/>
            <person name="Basham D."/>
            <person name="Chillingworth T."/>
            <person name="Davies R.M."/>
            <person name="Feltwell T."/>
            <person name="Holroyd S."/>
            <person name="Jagels K."/>
            <person name="Karlyshev A.V."/>
            <person name="Moule S."/>
            <person name="Pallen M.J."/>
            <person name="Penn C.W."/>
            <person name="Quail M.A."/>
            <person name="Rajandream M.A."/>
            <person name="Rutherford K.M."/>
            <person name="van Vliet A.H.M."/>
            <person name="Whitehead S."/>
            <person name="Barrell B.G."/>
        </authorList>
    </citation>
    <scope>NUCLEOTIDE SEQUENCE [LARGE SCALE GENOMIC DNA]</scope>
    <source>
        <strain>ATCC 700819 / NCTC 11168</strain>
    </source>
</reference>